<proteinExistence type="inferred from homology"/>
<sequence length="344" mass="39493">MMNMLSDRKKLILKAVVENYSQKRQPVGSKMLTYLPYLKFASATIRYDMVQLEKEGFLQKNHTSSGRVPSFKGYVYYLNHLLTRDHDVACMFESIDKVIQKKRFCKGQVIKEALNLLNNLTNYTTMAIGSDIFNNSKITKIDFIPLNSAQAVILIITDKGNVQHQNISLEQTKEISIYDLKDVVQVVNDLLKDKFLSEAAHIIQSDFFKKTIAKYICFQEQLIALFMEAFSSFASENLYFSGVSKMLEKPELNNPEIIKKFMGLLERKELLKIMLNQDSLSFKFSDGLQLTPLKDCMILSIPFDVNPNEKGRIAVVGPSWMKYPKVIPILEYLAVHLSKLNDQE</sequence>
<accession>Q2NK67</accession>
<name>HRCA_AYWBP</name>
<dbReference type="EMBL" id="CP000061">
    <property type="protein sequence ID" value="ABC65176.1"/>
    <property type="molecule type" value="Genomic_DNA"/>
</dbReference>
<dbReference type="SMR" id="Q2NK67"/>
<dbReference type="STRING" id="322098.AYWB_059"/>
<dbReference type="KEGG" id="ayw:AYWB_059"/>
<dbReference type="eggNOG" id="COG1420">
    <property type="taxonomic scope" value="Bacteria"/>
</dbReference>
<dbReference type="HOGENOM" id="CLU_050019_1_0_14"/>
<dbReference type="OrthoDB" id="9783139at2"/>
<dbReference type="PhylomeDB" id="Q2NK67"/>
<dbReference type="Proteomes" id="UP000001934">
    <property type="component" value="Chromosome"/>
</dbReference>
<dbReference type="GO" id="GO:0003677">
    <property type="term" value="F:DNA binding"/>
    <property type="evidence" value="ECO:0007669"/>
    <property type="project" value="InterPro"/>
</dbReference>
<dbReference type="GO" id="GO:0045892">
    <property type="term" value="P:negative regulation of DNA-templated transcription"/>
    <property type="evidence" value="ECO:0007669"/>
    <property type="project" value="UniProtKB-UniRule"/>
</dbReference>
<dbReference type="Gene3D" id="3.30.450.40">
    <property type="match status" value="1"/>
</dbReference>
<dbReference type="Gene3D" id="3.30.390.60">
    <property type="entry name" value="Heat-inducible transcription repressor hrca homolog, domain 3"/>
    <property type="match status" value="1"/>
</dbReference>
<dbReference type="Gene3D" id="1.10.10.10">
    <property type="entry name" value="Winged helix-like DNA-binding domain superfamily/Winged helix DNA-binding domain"/>
    <property type="match status" value="1"/>
</dbReference>
<dbReference type="HAMAP" id="MF_00081">
    <property type="entry name" value="HrcA"/>
    <property type="match status" value="1"/>
</dbReference>
<dbReference type="InterPro" id="IPR029016">
    <property type="entry name" value="GAF-like_dom_sf"/>
</dbReference>
<dbReference type="InterPro" id="IPR002571">
    <property type="entry name" value="HrcA"/>
</dbReference>
<dbReference type="InterPro" id="IPR021153">
    <property type="entry name" value="HrcA_C"/>
</dbReference>
<dbReference type="InterPro" id="IPR036388">
    <property type="entry name" value="WH-like_DNA-bd_sf"/>
</dbReference>
<dbReference type="InterPro" id="IPR036390">
    <property type="entry name" value="WH_DNA-bd_sf"/>
</dbReference>
<dbReference type="InterPro" id="IPR023120">
    <property type="entry name" value="WHTH_transcript_rep_HrcA_IDD"/>
</dbReference>
<dbReference type="NCBIfam" id="TIGR00331">
    <property type="entry name" value="hrcA"/>
    <property type="match status" value="1"/>
</dbReference>
<dbReference type="PANTHER" id="PTHR34824">
    <property type="entry name" value="HEAT-INDUCIBLE TRANSCRIPTION REPRESSOR HRCA"/>
    <property type="match status" value="1"/>
</dbReference>
<dbReference type="PANTHER" id="PTHR34824:SF1">
    <property type="entry name" value="HEAT-INDUCIBLE TRANSCRIPTION REPRESSOR HRCA"/>
    <property type="match status" value="1"/>
</dbReference>
<dbReference type="Pfam" id="PF01628">
    <property type="entry name" value="HrcA"/>
    <property type="match status" value="1"/>
</dbReference>
<dbReference type="PIRSF" id="PIRSF005485">
    <property type="entry name" value="HrcA"/>
    <property type="match status" value="1"/>
</dbReference>
<dbReference type="SUPFAM" id="SSF55781">
    <property type="entry name" value="GAF domain-like"/>
    <property type="match status" value="1"/>
</dbReference>
<dbReference type="SUPFAM" id="SSF46785">
    <property type="entry name" value="Winged helix' DNA-binding domain"/>
    <property type="match status" value="1"/>
</dbReference>
<organism>
    <name type="scientific">Aster yellows witches'-broom phytoplasma (strain AYWB)</name>
    <dbReference type="NCBI Taxonomy" id="322098"/>
    <lineage>
        <taxon>Bacteria</taxon>
        <taxon>Bacillati</taxon>
        <taxon>Mycoplasmatota</taxon>
        <taxon>Mollicutes</taxon>
        <taxon>Acholeplasmatales</taxon>
        <taxon>Acholeplasmataceae</taxon>
        <taxon>Candidatus Phytoplasma</taxon>
        <taxon>16SrI (Aster yellows group)</taxon>
    </lineage>
</organism>
<keyword id="KW-0678">Repressor</keyword>
<keyword id="KW-0346">Stress response</keyword>
<keyword id="KW-0804">Transcription</keyword>
<keyword id="KW-0805">Transcription regulation</keyword>
<comment type="function">
    <text evidence="1">Negative regulator of class I heat shock genes (grpE-dnaK-dnaJ and groELS operons). Prevents heat-shock induction of these operons.</text>
</comment>
<comment type="similarity">
    <text evidence="1">Belongs to the HrcA family.</text>
</comment>
<gene>
    <name evidence="1" type="primary">hrcA</name>
    <name type="ordered locus">AYWB_059</name>
</gene>
<reference key="1">
    <citation type="journal article" date="2006" name="J. Bacteriol.">
        <title>Living with genome instability: the adaptation of phytoplasmas to diverse environments of their insect and plant hosts.</title>
        <authorList>
            <person name="Bai X."/>
            <person name="Zhang J."/>
            <person name="Ewing A."/>
            <person name="Miller S.A."/>
            <person name="Jancso Radek A."/>
            <person name="Shevchenko D.V."/>
            <person name="Tsukerman K."/>
            <person name="Walunas T."/>
            <person name="Lapidus A."/>
            <person name="Campbell J.W."/>
            <person name="Hogenhout S.A."/>
        </authorList>
    </citation>
    <scope>NUCLEOTIDE SEQUENCE [LARGE SCALE GENOMIC DNA]</scope>
    <source>
        <strain>AYWB</strain>
    </source>
</reference>
<protein>
    <recommendedName>
        <fullName evidence="1">Heat-inducible transcription repressor HrcA</fullName>
    </recommendedName>
</protein>
<feature type="chain" id="PRO_1000010375" description="Heat-inducible transcription repressor HrcA">
    <location>
        <begin position="1"/>
        <end position="344"/>
    </location>
</feature>
<evidence type="ECO:0000255" key="1">
    <source>
        <dbReference type="HAMAP-Rule" id="MF_00081"/>
    </source>
</evidence>